<evidence type="ECO:0000255" key="1">
    <source>
        <dbReference type="HAMAP-Rule" id="MF_01857"/>
    </source>
</evidence>
<protein>
    <recommendedName>
        <fullName evidence="1">Ribosomal RNA large subunit methyltransferase I</fullName>
        <ecNumber evidence="1">2.1.1.191</ecNumber>
    </recommendedName>
    <alternativeName>
        <fullName evidence="1">23S rRNA m5C1962 methyltransferase</fullName>
    </alternativeName>
    <alternativeName>
        <fullName evidence="1">rRNA (cytosine-C(5)-)-methyltransferase RlmI</fullName>
    </alternativeName>
</protein>
<comment type="function">
    <text evidence="1">Specifically methylates the cytosine at position 1962 (m5C1962) of 23S rRNA.</text>
</comment>
<comment type="catalytic activity">
    <reaction evidence="1">
        <text>cytidine(1962) in 23S rRNA + S-adenosyl-L-methionine = 5-methylcytidine(1962) in 23S rRNA + S-adenosyl-L-homocysteine + H(+)</text>
        <dbReference type="Rhea" id="RHEA:42912"/>
        <dbReference type="Rhea" id="RHEA-COMP:10382"/>
        <dbReference type="Rhea" id="RHEA-COMP:10386"/>
        <dbReference type="ChEBI" id="CHEBI:15378"/>
        <dbReference type="ChEBI" id="CHEBI:57856"/>
        <dbReference type="ChEBI" id="CHEBI:59789"/>
        <dbReference type="ChEBI" id="CHEBI:74483"/>
        <dbReference type="ChEBI" id="CHEBI:82748"/>
        <dbReference type="EC" id="2.1.1.191"/>
    </reaction>
</comment>
<comment type="subcellular location">
    <subcellularLocation>
        <location evidence="1">Cytoplasm</location>
    </subcellularLocation>
</comment>
<comment type="similarity">
    <text evidence="1">Belongs to the methyltransferase superfamily. RlmI family.</text>
</comment>
<proteinExistence type="inferred from homology"/>
<reference key="1">
    <citation type="journal article" date="2004" name="Proc. Natl. Acad. Sci. U.S.A.">
        <title>Insights into the evolution of Yersinia pestis through whole-genome comparison with Yersinia pseudotuberculosis.</title>
        <authorList>
            <person name="Chain P.S.G."/>
            <person name="Carniel E."/>
            <person name="Larimer F.W."/>
            <person name="Lamerdin J."/>
            <person name="Stoutland P.O."/>
            <person name="Regala W.M."/>
            <person name="Georgescu A.M."/>
            <person name="Vergez L.M."/>
            <person name="Land M.L."/>
            <person name="Motin V.L."/>
            <person name="Brubaker R.R."/>
            <person name="Fowler J."/>
            <person name="Hinnebusch J."/>
            <person name="Marceau M."/>
            <person name="Medigue C."/>
            <person name="Simonet M."/>
            <person name="Chenal-Francisque V."/>
            <person name="Souza B."/>
            <person name="Dacheux D."/>
            <person name="Elliott J.M."/>
            <person name="Derbise A."/>
            <person name="Hauser L.J."/>
            <person name="Garcia E."/>
        </authorList>
    </citation>
    <scope>NUCLEOTIDE SEQUENCE [LARGE SCALE GENOMIC DNA]</scope>
    <source>
        <strain>IP32953</strain>
    </source>
</reference>
<dbReference type="EC" id="2.1.1.191" evidence="1"/>
<dbReference type="EMBL" id="BX936398">
    <property type="protein sequence ID" value="CAH20703.1"/>
    <property type="molecule type" value="Genomic_DNA"/>
</dbReference>
<dbReference type="RefSeq" id="WP_002213052.1">
    <property type="nucleotide sequence ID" value="NZ_CP009712.1"/>
</dbReference>
<dbReference type="SMR" id="Q66CE0"/>
<dbReference type="GeneID" id="57977118"/>
<dbReference type="KEGG" id="ypo:BZ17_1055"/>
<dbReference type="KEGG" id="yps:YPTB1463"/>
<dbReference type="PATRIC" id="fig|273123.14.peg.1120"/>
<dbReference type="Proteomes" id="UP000001011">
    <property type="component" value="Chromosome"/>
</dbReference>
<dbReference type="GO" id="GO:0005737">
    <property type="term" value="C:cytoplasm"/>
    <property type="evidence" value="ECO:0007669"/>
    <property type="project" value="UniProtKB-SubCell"/>
</dbReference>
<dbReference type="GO" id="GO:0003723">
    <property type="term" value="F:RNA binding"/>
    <property type="evidence" value="ECO:0007669"/>
    <property type="project" value="UniProtKB-KW"/>
</dbReference>
<dbReference type="GO" id="GO:0016434">
    <property type="term" value="F:rRNA (cytosine) methyltransferase activity"/>
    <property type="evidence" value="ECO:0007669"/>
    <property type="project" value="UniProtKB-UniRule"/>
</dbReference>
<dbReference type="CDD" id="cd02440">
    <property type="entry name" value="AdoMet_MTases"/>
    <property type="match status" value="1"/>
</dbReference>
<dbReference type="CDD" id="cd21153">
    <property type="entry name" value="PUA_RlmI"/>
    <property type="match status" value="1"/>
</dbReference>
<dbReference type="CDD" id="cd11572">
    <property type="entry name" value="RlmI_M_like"/>
    <property type="match status" value="1"/>
</dbReference>
<dbReference type="Gene3D" id="2.30.130.10">
    <property type="entry name" value="PUA domain"/>
    <property type="match status" value="1"/>
</dbReference>
<dbReference type="Gene3D" id="3.30.750.80">
    <property type="entry name" value="RNA methyltransferase domain (HRMD) like"/>
    <property type="match status" value="1"/>
</dbReference>
<dbReference type="Gene3D" id="3.40.50.150">
    <property type="entry name" value="Vaccinia Virus protein VP39"/>
    <property type="match status" value="1"/>
</dbReference>
<dbReference type="HAMAP" id="MF_01857">
    <property type="entry name" value="23SrRNA_methyltr_I"/>
    <property type="match status" value="1"/>
</dbReference>
<dbReference type="InterPro" id="IPR002478">
    <property type="entry name" value="PUA"/>
</dbReference>
<dbReference type="InterPro" id="IPR015947">
    <property type="entry name" value="PUA-like_sf"/>
</dbReference>
<dbReference type="InterPro" id="IPR036974">
    <property type="entry name" value="PUA_sf"/>
</dbReference>
<dbReference type="InterPro" id="IPR023542">
    <property type="entry name" value="RLMI"/>
</dbReference>
<dbReference type="InterPro" id="IPR041532">
    <property type="entry name" value="RlmI-like_PUA"/>
</dbReference>
<dbReference type="InterPro" id="IPR019614">
    <property type="entry name" value="SAM-dep_methyl-trfase"/>
</dbReference>
<dbReference type="InterPro" id="IPR029063">
    <property type="entry name" value="SAM-dependent_MTases_sf"/>
</dbReference>
<dbReference type="NCBIfam" id="NF011707">
    <property type="entry name" value="PRK15128.1"/>
    <property type="match status" value="1"/>
</dbReference>
<dbReference type="PANTHER" id="PTHR42873">
    <property type="entry name" value="RIBOSOMAL RNA LARGE SUBUNIT METHYLTRANSFERASE"/>
    <property type="match status" value="1"/>
</dbReference>
<dbReference type="PANTHER" id="PTHR42873:SF1">
    <property type="entry name" value="S-ADENOSYLMETHIONINE-DEPENDENT METHYLTRANSFERASE DOMAIN-CONTAINING PROTEIN"/>
    <property type="match status" value="1"/>
</dbReference>
<dbReference type="Pfam" id="PF10672">
    <property type="entry name" value="Methyltrans_SAM"/>
    <property type="match status" value="1"/>
</dbReference>
<dbReference type="Pfam" id="PF17785">
    <property type="entry name" value="PUA_3"/>
    <property type="match status" value="1"/>
</dbReference>
<dbReference type="SMART" id="SM00359">
    <property type="entry name" value="PUA"/>
    <property type="match status" value="1"/>
</dbReference>
<dbReference type="SUPFAM" id="SSF88697">
    <property type="entry name" value="PUA domain-like"/>
    <property type="match status" value="1"/>
</dbReference>
<dbReference type="SUPFAM" id="SSF53335">
    <property type="entry name" value="S-adenosyl-L-methionine-dependent methyltransferases"/>
    <property type="match status" value="1"/>
</dbReference>
<dbReference type="PROSITE" id="PS50890">
    <property type="entry name" value="PUA"/>
    <property type="match status" value="1"/>
</dbReference>
<accession>Q66CE0</accession>
<sequence>MTVRLILAKGREKSLLRRHPWIFSGAVQRLEGDALSGETIDILDSQGKWLARAAYSPESQILARVWTFQQDEVIDCAFFIRRLQQAQNWRDWLAQRDGLNGYRLIAGESDGLPGITIDRFQNFLVLQLLSAGAEYQRETLVSALQHCYPECSIYDRSDVSVRKKEGLPLTQGLICGEMPPALLPISENGMQLFVDIQQGHKTGFYLDQRDSRLAARNYANGRRVLNCFSYTGAFAVAALMGNCQQVISVDTSQSVLDIAKQNIELNQLDLSKTEFVRDDVFQLLRSYRAQGEKFDLIIMDPPKFVENKSQLASACRGYKDINMLAIQLLRPGGILLSFSCSGLMPVDLFQKILADAALDAGHDIQFIEQFRQAADHPVIAAYPEGLYLKGFACRVM</sequence>
<feature type="chain" id="PRO_0000366285" description="Ribosomal RNA large subunit methyltransferase I">
    <location>
        <begin position="1"/>
        <end position="396"/>
    </location>
</feature>
<feature type="domain" description="PUA" evidence="1">
    <location>
        <begin position="2"/>
        <end position="81"/>
    </location>
</feature>
<keyword id="KW-0963">Cytoplasm</keyword>
<keyword id="KW-0489">Methyltransferase</keyword>
<keyword id="KW-0694">RNA-binding</keyword>
<keyword id="KW-0698">rRNA processing</keyword>
<keyword id="KW-0949">S-adenosyl-L-methionine</keyword>
<keyword id="KW-0808">Transferase</keyword>
<gene>
    <name evidence="1" type="primary">rlmI</name>
    <name type="ordered locus">YPTB1463</name>
</gene>
<organism>
    <name type="scientific">Yersinia pseudotuberculosis serotype I (strain IP32953)</name>
    <dbReference type="NCBI Taxonomy" id="273123"/>
    <lineage>
        <taxon>Bacteria</taxon>
        <taxon>Pseudomonadati</taxon>
        <taxon>Pseudomonadota</taxon>
        <taxon>Gammaproteobacteria</taxon>
        <taxon>Enterobacterales</taxon>
        <taxon>Yersiniaceae</taxon>
        <taxon>Yersinia</taxon>
    </lineage>
</organism>
<name>RLMI_YERPS</name>